<dbReference type="EMBL" id="AE016819">
    <property type="protein sequence ID" value="AAS53652.2"/>
    <property type="molecule type" value="Genomic_DNA"/>
</dbReference>
<dbReference type="RefSeq" id="NP_985828.2">
    <property type="nucleotide sequence ID" value="NM_211183.2"/>
</dbReference>
<dbReference type="SMR" id="Q753N1"/>
<dbReference type="FunCoup" id="Q753N1">
    <property type="interactions" value="344"/>
</dbReference>
<dbReference type="STRING" id="284811.Q753N1"/>
<dbReference type="EnsemblFungi" id="AAS53652">
    <property type="protein sequence ID" value="AAS53652"/>
    <property type="gene ID" value="AGOS_AFR281C"/>
</dbReference>
<dbReference type="GeneID" id="4622091"/>
<dbReference type="KEGG" id="ago:AGOS_AFR281C"/>
<dbReference type="eggNOG" id="KOG0995">
    <property type="taxonomic scope" value="Eukaryota"/>
</dbReference>
<dbReference type="HOGENOM" id="CLU_012583_1_2_1"/>
<dbReference type="InParanoid" id="Q753N1"/>
<dbReference type="OMA" id="PSHKFQK"/>
<dbReference type="OrthoDB" id="7459479at2759"/>
<dbReference type="Proteomes" id="UP000000591">
    <property type="component" value="Chromosome VI"/>
</dbReference>
<dbReference type="GO" id="GO:0031262">
    <property type="term" value="C:Ndc80 complex"/>
    <property type="evidence" value="ECO:0000250"/>
    <property type="project" value="UniProtKB"/>
</dbReference>
<dbReference type="GO" id="GO:0005634">
    <property type="term" value="C:nucleus"/>
    <property type="evidence" value="ECO:0007669"/>
    <property type="project" value="UniProtKB-SubCell"/>
</dbReference>
<dbReference type="GO" id="GO:0042802">
    <property type="term" value="F:identical protein binding"/>
    <property type="evidence" value="ECO:0007669"/>
    <property type="project" value="EnsemblFungi"/>
</dbReference>
<dbReference type="GO" id="GO:0008017">
    <property type="term" value="F:microtubule binding"/>
    <property type="evidence" value="ECO:0000250"/>
    <property type="project" value="UniProtKB"/>
</dbReference>
<dbReference type="GO" id="GO:0051315">
    <property type="term" value="P:attachment of mitotic spindle microtubules to kinetochore"/>
    <property type="evidence" value="ECO:0000318"/>
    <property type="project" value="GO_Central"/>
</dbReference>
<dbReference type="GO" id="GO:0051301">
    <property type="term" value="P:cell division"/>
    <property type="evidence" value="ECO:0007669"/>
    <property type="project" value="UniProtKB-KW"/>
</dbReference>
<dbReference type="GO" id="GO:1990758">
    <property type="term" value="P:mitotic sister chromatid biorientation"/>
    <property type="evidence" value="ECO:0000250"/>
    <property type="project" value="UniProtKB"/>
</dbReference>
<dbReference type="GO" id="GO:0034501">
    <property type="term" value="P:protein localization to kinetochore"/>
    <property type="evidence" value="ECO:0007669"/>
    <property type="project" value="EnsemblFungi"/>
</dbReference>
<dbReference type="FunFam" id="1.10.418.30:FF:000001">
    <property type="entry name" value="Probable kinetochore protein ndc80"/>
    <property type="match status" value="1"/>
</dbReference>
<dbReference type="Gene3D" id="1.10.287.1490">
    <property type="match status" value="1"/>
</dbReference>
<dbReference type="Gene3D" id="6.10.250.1950">
    <property type="match status" value="1"/>
</dbReference>
<dbReference type="Gene3D" id="1.10.418.30">
    <property type="entry name" value="Ncd80 complex, Ncd80 subunit"/>
    <property type="match status" value="1"/>
</dbReference>
<dbReference type="InterPro" id="IPR040967">
    <property type="entry name" value="DUF5595"/>
</dbReference>
<dbReference type="InterPro" id="IPR005550">
    <property type="entry name" value="Kinetochore_Ndc80"/>
</dbReference>
<dbReference type="InterPro" id="IPR055260">
    <property type="entry name" value="Ndc80_CH"/>
</dbReference>
<dbReference type="InterPro" id="IPR038273">
    <property type="entry name" value="Ndc80_sf"/>
</dbReference>
<dbReference type="PANTHER" id="PTHR10643">
    <property type="entry name" value="KINETOCHORE PROTEIN NDC80"/>
    <property type="match status" value="1"/>
</dbReference>
<dbReference type="PANTHER" id="PTHR10643:SF2">
    <property type="entry name" value="KINETOCHORE PROTEIN NDC80 HOMOLOG"/>
    <property type="match status" value="1"/>
</dbReference>
<dbReference type="Pfam" id="PF18077">
    <property type="entry name" value="DUF5595"/>
    <property type="match status" value="1"/>
</dbReference>
<dbReference type="Pfam" id="PF03801">
    <property type="entry name" value="Ndc80_HEC"/>
    <property type="match status" value="1"/>
</dbReference>
<evidence type="ECO:0000250" key="1"/>
<evidence type="ECO:0000255" key="2"/>
<evidence type="ECO:0000256" key="3">
    <source>
        <dbReference type="SAM" id="MobiDB-lite"/>
    </source>
</evidence>
<evidence type="ECO:0000305" key="4"/>
<sequence length="661" mass="75839">MAERRGSSGANGVLNSLNPQRFTSQIPSIGGNTNKKGVPGTNAALTDMINKSLARNGRSSLSRPVPEVRKSLRRSLRSSQRPSIVPGGGPSAYGALQSTRDPRPLRDKNYQAVLQQEIFDYLQSRKFDIETGHAISLKSLKQPTQKDFICIFRWLYRRLDPGYSFKRSLETEVYSILKTIQYPFLDTINKSQISAVGGSNWHKFLGMLHWLMNTSQRLDSCLHKLDESKTMQLTQDITILNQPVTTLDEQDEKHEQYELMVERLFIEYISKCYKSFINMEDDFSPFKEELEIGFDRFVHIIETDINNLGRQEEMLQQDCEMFAARCEGLKLARSKHQALKGDLVKFQNYINAMKNKAEDWPRKLNQMVEEINEKKGLIKDIHAEIDKLRQALSQEDIQEIDQMNQQRDTFSKMLDTVSSKLDNLTGSVKSQKLNLESSSKVFLDTLEKFNASINGFVLARNNLQHPINPAELLIPVKANITLTDSTAITPSTILEGCTDILSSIKPNLLKVNKEIDERISALQTENNQLEKELRGLRDTITSKGHMLESMENELSNIKSEYDEYQQVSHSKLLSQRIEIEKLERKIQNDRHKTQQRVAQAEQEIEDAAFKLKELTLKIQQERVVLHRKLIKVIEYVVSFKMDVQGSIEALHDFSVEQLESL</sequence>
<organism>
    <name type="scientific">Eremothecium gossypii (strain ATCC 10895 / CBS 109.51 / FGSC 9923 / NRRL Y-1056)</name>
    <name type="common">Yeast</name>
    <name type="synonym">Ashbya gossypii</name>
    <dbReference type="NCBI Taxonomy" id="284811"/>
    <lineage>
        <taxon>Eukaryota</taxon>
        <taxon>Fungi</taxon>
        <taxon>Dikarya</taxon>
        <taxon>Ascomycota</taxon>
        <taxon>Saccharomycotina</taxon>
        <taxon>Saccharomycetes</taxon>
        <taxon>Saccharomycetales</taxon>
        <taxon>Saccharomycetaceae</taxon>
        <taxon>Eremothecium</taxon>
    </lineage>
</organism>
<protein>
    <recommendedName>
        <fullName>Probable kinetochore protein NDC80</fullName>
    </recommendedName>
</protein>
<gene>
    <name type="primary">NDC80</name>
    <name type="ordered locus">AFR281C</name>
</gene>
<reference key="1">
    <citation type="journal article" date="2004" name="Science">
        <title>The Ashbya gossypii genome as a tool for mapping the ancient Saccharomyces cerevisiae genome.</title>
        <authorList>
            <person name="Dietrich F.S."/>
            <person name="Voegeli S."/>
            <person name="Brachat S."/>
            <person name="Lerch A."/>
            <person name="Gates K."/>
            <person name="Steiner S."/>
            <person name="Mohr C."/>
            <person name="Poehlmann R."/>
            <person name="Luedi P."/>
            <person name="Choi S."/>
            <person name="Wing R.A."/>
            <person name="Flavier A."/>
            <person name="Gaffney T.D."/>
            <person name="Philippsen P."/>
        </authorList>
    </citation>
    <scope>NUCLEOTIDE SEQUENCE [LARGE SCALE GENOMIC DNA]</scope>
    <source>
        <strain>ATCC 10895 / CBS 109.51 / FGSC 9923 / NRRL Y-1056</strain>
    </source>
</reference>
<reference key="2">
    <citation type="journal article" date="2013" name="G3 (Bethesda)">
        <title>Genomes of Ashbya fungi isolated from insects reveal four mating-type loci, numerous translocations, lack of transposons, and distinct gene duplications.</title>
        <authorList>
            <person name="Dietrich F.S."/>
            <person name="Voegeli S."/>
            <person name="Kuo S."/>
            <person name="Philippsen P."/>
        </authorList>
    </citation>
    <scope>GENOME REANNOTATION</scope>
    <scope>SEQUENCE REVISION TO 169-172; 179-180 AND 536-544</scope>
    <source>
        <strain>ATCC 10895 / CBS 109.51 / FGSC 9923 / NRRL Y-1056</strain>
    </source>
</reference>
<accession>Q753N1</accession>
<proteinExistence type="inferred from homology"/>
<comment type="function">
    <text evidence="1">Acts as a component of the essential kinetochore-associated NDC80 complex, which is required for chromosome segregation and spindle checkpoint activity.</text>
</comment>
<comment type="subunit">
    <text evidence="1">Component of the NDC80 complex, which consists of NDC80, NUF2, SPC24 and SPC25.</text>
</comment>
<comment type="subcellular location">
    <subcellularLocation>
        <location evidence="1">Nucleus</location>
    </subcellularLocation>
    <subcellularLocation>
        <location evidence="1">Chromosome</location>
        <location evidence="1">Centromere</location>
        <location evidence="1">Kinetochore</location>
    </subcellularLocation>
    <text evidence="1">Associated with kinetochores.</text>
</comment>
<comment type="similarity">
    <text evidence="4">Belongs to the NDC80/HEC1 family.</text>
</comment>
<name>NDC80_EREGS</name>
<feature type="chain" id="PRO_0000246631" description="Probable kinetochore protein NDC80">
    <location>
        <begin position="1"/>
        <end position="661"/>
    </location>
</feature>
<feature type="region of interest" description="Disordered" evidence="3">
    <location>
        <begin position="1"/>
        <end position="38"/>
    </location>
</feature>
<feature type="region of interest" description="Disordered" evidence="3">
    <location>
        <begin position="54"/>
        <end position="101"/>
    </location>
</feature>
<feature type="coiled-coil region" evidence="2">
    <location>
        <begin position="368"/>
        <end position="398"/>
    </location>
</feature>
<feature type="coiled-coil region" evidence="2">
    <location>
        <begin position="507"/>
        <end position="623"/>
    </location>
</feature>
<feature type="compositionally biased region" description="Polar residues" evidence="3">
    <location>
        <begin position="8"/>
        <end position="35"/>
    </location>
</feature>
<keyword id="KW-0131">Cell cycle</keyword>
<keyword id="KW-0132">Cell division</keyword>
<keyword id="KW-0137">Centromere</keyword>
<keyword id="KW-0158">Chromosome</keyword>
<keyword id="KW-0175">Coiled coil</keyword>
<keyword id="KW-0995">Kinetochore</keyword>
<keyword id="KW-0498">Mitosis</keyword>
<keyword id="KW-0539">Nucleus</keyword>
<keyword id="KW-1185">Reference proteome</keyword>